<evidence type="ECO:0000250" key="1"/>
<evidence type="ECO:0000255" key="2">
    <source>
        <dbReference type="PROSITE-ProRule" id="PRU00145"/>
    </source>
</evidence>
<evidence type="ECO:0000255" key="3">
    <source>
        <dbReference type="PROSITE-ProRule" id="PRU00192"/>
    </source>
</evidence>
<evidence type="ECO:0000256" key="4">
    <source>
        <dbReference type="SAM" id="MobiDB-lite"/>
    </source>
</evidence>
<evidence type="ECO:0000305" key="5"/>
<proteinExistence type="inferred from homology"/>
<sequence>MLPIPEELTTLISDLELYLADGLKGENLSKKAKEKREAFIKRIKEVKLSFPQDFKDKYAEDSEEEEDWDSNEGGSLQSERTDKDEEACEGAQQAPAVAAQDLTSVFKAGYLEKRRKDHSFFGTEWQKRWCALSGQTFYYYGSEKDKQQKGEFNIEGYRVKMNSSLRKDSKKDFCFEISATDKRSYMFCASSVKEAEEWVKQIDFVLKDMTGIIPEEEEEGQELYDDVGQMDEIYEVLPEEDMPSPPPKVEPVSKHPPPTPAVDKSTDYANYYQGLWDCMGDLPDELSFKRGDAIYILSREYQTFGWWVGEKNGQIGIVPKDYLMELYAL</sequence>
<keyword id="KW-0075">B-cell activation</keyword>
<keyword id="KW-0963">Cytoplasm</keyword>
<keyword id="KW-0597">Phosphoprotein</keyword>
<keyword id="KW-1185">Reference proteome</keyword>
<keyword id="KW-0728">SH3 domain</keyword>
<comment type="function">
    <text evidence="1">May be involved in B-cell and macrophage adhesion processes. May play a role in src signaling pathway (By similarity).</text>
</comment>
<comment type="subcellular location">
    <subcellularLocation>
        <location evidence="1">Cytoplasm</location>
    </subcellularLocation>
</comment>
<comment type="PTM">
    <text evidence="1">Phosphorylated on tyrosines.</text>
</comment>
<comment type="similarity">
    <text evidence="5">Belongs to the SKAP family.</text>
</comment>
<reference key="1">
    <citation type="journal article" date="2006" name="Proc. Natl. Acad. Sci. U.S.A.">
        <title>Highly conserved syntenic blocks at the vertebrate Hox loci and conserved regulatory elements within and outside Hox gene clusters.</title>
        <authorList>
            <person name="Lee A.P."/>
            <person name="Koh E.G.L."/>
            <person name="Tay A."/>
            <person name="Brenner S."/>
            <person name="Venkatesh B."/>
        </authorList>
    </citation>
    <scope>NUCLEOTIDE SEQUENCE [GENOMIC DNA]</scope>
</reference>
<protein>
    <recommendedName>
        <fullName>Src kinase-associated phosphoprotein 2</fullName>
    </recommendedName>
    <alternativeName>
        <fullName>Src family-associated phosphoprotein 2</fullName>
    </alternativeName>
</protein>
<name>SKAP2_TAKRU</name>
<organism>
    <name type="scientific">Takifugu rubripes</name>
    <name type="common">Japanese pufferfish</name>
    <name type="synonym">Fugu rubripes</name>
    <dbReference type="NCBI Taxonomy" id="31033"/>
    <lineage>
        <taxon>Eukaryota</taxon>
        <taxon>Metazoa</taxon>
        <taxon>Chordata</taxon>
        <taxon>Craniata</taxon>
        <taxon>Vertebrata</taxon>
        <taxon>Euteleostomi</taxon>
        <taxon>Actinopterygii</taxon>
        <taxon>Neopterygii</taxon>
        <taxon>Teleostei</taxon>
        <taxon>Neoteleostei</taxon>
        <taxon>Acanthomorphata</taxon>
        <taxon>Eupercaria</taxon>
        <taxon>Tetraodontiformes</taxon>
        <taxon>Tetradontoidea</taxon>
        <taxon>Tetraodontidae</taxon>
        <taxon>Takifugu</taxon>
    </lineage>
</organism>
<dbReference type="EMBL" id="DQ481664">
    <property type="protein sequence ID" value="ABF22403.1"/>
    <property type="molecule type" value="Genomic_DNA"/>
</dbReference>
<dbReference type="RefSeq" id="XP_011604031.1">
    <property type="nucleotide sequence ID" value="XM_011605729.1"/>
</dbReference>
<dbReference type="SMR" id="Q1KKZ1"/>
<dbReference type="FunCoup" id="Q1KKZ1">
    <property type="interactions" value="761"/>
</dbReference>
<dbReference type="STRING" id="31033.ENSTRUP00000051228"/>
<dbReference type="GeneID" id="101062242"/>
<dbReference type="CTD" id="8935"/>
<dbReference type="InParanoid" id="Q1KKZ1"/>
<dbReference type="OrthoDB" id="243840at2759"/>
<dbReference type="Proteomes" id="UP000005226">
    <property type="component" value="Unplaced"/>
</dbReference>
<dbReference type="GO" id="GO:0005737">
    <property type="term" value="C:cytoplasm"/>
    <property type="evidence" value="ECO:0007669"/>
    <property type="project" value="UniProtKB-SubCell"/>
</dbReference>
<dbReference type="GO" id="GO:0005886">
    <property type="term" value="C:plasma membrane"/>
    <property type="evidence" value="ECO:0007669"/>
    <property type="project" value="TreeGrafter"/>
</dbReference>
<dbReference type="GO" id="GO:0042113">
    <property type="term" value="P:B cell activation"/>
    <property type="evidence" value="ECO:0007669"/>
    <property type="project" value="UniProtKB-KW"/>
</dbReference>
<dbReference type="FunFam" id="2.30.29.30:FF:000194">
    <property type="entry name" value="Putative src kinase-associated phosphoprotein 2"/>
    <property type="match status" value="1"/>
</dbReference>
<dbReference type="FunFam" id="2.30.30.40:FF:000097">
    <property type="entry name" value="Putative src kinase-associated phosphoprotein 2"/>
    <property type="match status" value="1"/>
</dbReference>
<dbReference type="Gene3D" id="6.10.250.220">
    <property type="match status" value="1"/>
</dbReference>
<dbReference type="Gene3D" id="2.30.29.30">
    <property type="entry name" value="Pleckstrin-homology domain (PH domain)/Phosphotyrosine-binding domain (PTB)"/>
    <property type="match status" value="1"/>
</dbReference>
<dbReference type="Gene3D" id="2.30.30.40">
    <property type="entry name" value="SH3 Domains"/>
    <property type="match status" value="1"/>
</dbReference>
<dbReference type="InterPro" id="IPR011993">
    <property type="entry name" value="PH-like_dom_sf"/>
</dbReference>
<dbReference type="InterPro" id="IPR001849">
    <property type="entry name" value="PH_domain"/>
</dbReference>
<dbReference type="InterPro" id="IPR036028">
    <property type="entry name" value="SH3-like_dom_sf"/>
</dbReference>
<dbReference type="InterPro" id="IPR001452">
    <property type="entry name" value="SH3_domain"/>
</dbReference>
<dbReference type="InterPro" id="IPR037781">
    <property type="entry name" value="SKAP_fam"/>
</dbReference>
<dbReference type="PANTHER" id="PTHR15129:SF2">
    <property type="entry name" value="SRC KINASE-ASSOCIATED PHOSPHOPROTEIN 2"/>
    <property type="match status" value="1"/>
</dbReference>
<dbReference type="PANTHER" id="PTHR15129">
    <property type="entry name" value="SRC-ASSOCIATED ADAPTOR PROTEIN"/>
    <property type="match status" value="1"/>
</dbReference>
<dbReference type="Pfam" id="PF00169">
    <property type="entry name" value="PH"/>
    <property type="match status" value="1"/>
</dbReference>
<dbReference type="Pfam" id="PF00018">
    <property type="entry name" value="SH3_1"/>
    <property type="match status" value="1"/>
</dbReference>
<dbReference type="PRINTS" id="PR00452">
    <property type="entry name" value="SH3DOMAIN"/>
</dbReference>
<dbReference type="SMART" id="SM00233">
    <property type="entry name" value="PH"/>
    <property type="match status" value="1"/>
</dbReference>
<dbReference type="SMART" id="SM00326">
    <property type="entry name" value="SH3"/>
    <property type="match status" value="1"/>
</dbReference>
<dbReference type="SUPFAM" id="SSF50729">
    <property type="entry name" value="PH domain-like"/>
    <property type="match status" value="1"/>
</dbReference>
<dbReference type="SUPFAM" id="SSF50044">
    <property type="entry name" value="SH3-domain"/>
    <property type="match status" value="1"/>
</dbReference>
<dbReference type="PROSITE" id="PS50003">
    <property type="entry name" value="PH_DOMAIN"/>
    <property type="match status" value="1"/>
</dbReference>
<dbReference type="PROSITE" id="PS50002">
    <property type="entry name" value="SH3"/>
    <property type="match status" value="1"/>
</dbReference>
<gene>
    <name type="primary">skap2</name>
    <name type="synonym">scap2</name>
</gene>
<feature type="chain" id="PRO_0000270184" description="Src kinase-associated phosphoprotein 2">
    <location>
        <begin position="1"/>
        <end position="329"/>
    </location>
</feature>
<feature type="domain" description="PH" evidence="2">
    <location>
        <begin position="104"/>
        <end position="207"/>
    </location>
</feature>
<feature type="domain" description="SH3" evidence="3">
    <location>
        <begin position="267"/>
        <end position="328"/>
    </location>
</feature>
<feature type="region of interest" description="Disordered" evidence="4">
    <location>
        <begin position="58"/>
        <end position="95"/>
    </location>
</feature>
<feature type="region of interest" description="Disordered" evidence="4">
    <location>
        <begin position="240"/>
        <end position="263"/>
    </location>
</feature>
<feature type="compositionally biased region" description="Acidic residues" evidence="4">
    <location>
        <begin position="61"/>
        <end position="70"/>
    </location>
</feature>
<feature type="compositionally biased region" description="Pro residues" evidence="4">
    <location>
        <begin position="243"/>
        <end position="260"/>
    </location>
</feature>
<accession>Q1KKZ1</accession>